<proteinExistence type="inferred from homology"/>
<accession>A4G2M2</accession>
<gene>
    <name evidence="1" type="primary">rlmH</name>
    <name type="ordered locus">HEAR0553</name>
</gene>
<organism>
    <name type="scientific">Herminiimonas arsenicoxydans</name>
    <dbReference type="NCBI Taxonomy" id="204773"/>
    <lineage>
        <taxon>Bacteria</taxon>
        <taxon>Pseudomonadati</taxon>
        <taxon>Pseudomonadota</taxon>
        <taxon>Betaproteobacteria</taxon>
        <taxon>Burkholderiales</taxon>
        <taxon>Oxalobacteraceae</taxon>
        <taxon>Herminiimonas</taxon>
    </lineage>
</organism>
<feature type="chain" id="PRO_1000061790" description="Ribosomal RNA large subunit methyltransferase H">
    <location>
        <begin position="1"/>
        <end position="156"/>
    </location>
</feature>
<feature type="binding site" evidence="1">
    <location>
        <position position="73"/>
    </location>
    <ligand>
        <name>S-adenosyl-L-methionine</name>
        <dbReference type="ChEBI" id="CHEBI:59789"/>
    </ligand>
</feature>
<feature type="binding site" evidence="1">
    <location>
        <position position="104"/>
    </location>
    <ligand>
        <name>S-adenosyl-L-methionine</name>
        <dbReference type="ChEBI" id="CHEBI:59789"/>
    </ligand>
</feature>
<feature type="binding site" evidence="1">
    <location>
        <begin position="123"/>
        <end position="128"/>
    </location>
    <ligand>
        <name>S-adenosyl-L-methionine</name>
        <dbReference type="ChEBI" id="CHEBI:59789"/>
    </ligand>
</feature>
<sequence length="156" mass="17424">MQLVIAAVGHKMPAWIENGFGEYAKRMPPDCRIHLKEIKPVERSGSKTAETAMALERAKIEAAVPKGARIIALDEHGKDVTSVQLAQLLTQWQQDGRDVTFVIGGADGLDPDFKKKADMLIRISSLTLPHGMVRVMLAEQLYRAWSITQNHPYHRV</sequence>
<keyword id="KW-0963">Cytoplasm</keyword>
<keyword id="KW-0489">Methyltransferase</keyword>
<keyword id="KW-1185">Reference proteome</keyword>
<keyword id="KW-0698">rRNA processing</keyword>
<keyword id="KW-0949">S-adenosyl-L-methionine</keyword>
<keyword id="KW-0808">Transferase</keyword>
<protein>
    <recommendedName>
        <fullName evidence="1">Ribosomal RNA large subunit methyltransferase H</fullName>
        <ecNumber evidence="1">2.1.1.177</ecNumber>
    </recommendedName>
    <alternativeName>
        <fullName evidence="1">23S rRNA (pseudouridine1915-N3)-methyltransferase</fullName>
    </alternativeName>
    <alternativeName>
        <fullName evidence="1">23S rRNA m3Psi1915 methyltransferase</fullName>
    </alternativeName>
    <alternativeName>
        <fullName evidence="1">rRNA (pseudouridine-N3-)-methyltransferase RlmH</fullName>
    </alternativeName>
</protein>
<evidence type="ECO:0000255" key="1">
    <source>
        <dbReference type="HAMAP-Rule" id="MF_00658"/>
    </source>
</evidence>
<comment type="function">
    <text evidence="1">Specifically methylates the pseudouridine at position 1915 (m3Psi1915) in 23S rRNA.</text>
</comment>
<comment type="catalytic activity">
    <reaction evidence="1">
        <text>pseudouridine(1915) in 23S rRNA + S-adenosyl-L-methionine = N(3)-methylpseudouridine(1915) in 23S rRNA + S-adenosyl-L-homocysteine + H(+)</text>
        <dbReference type="Rhea" id="RHEA:42752"/>
        <dbReference type="Rhea" id="RHEA-COMP:10221"/>
        <dbReference type="Rhea" id="RHEA-COMP:10222"/>
        <dbReference type="ChEBI" id="CHEBI:15378"/>
        <dbReference type="ChEBI" id="CHEBI:57856"/>
        <dbReference type="ChEBI" id="CHEBI:59789"/>
        <dbReference type="ChEBI" id="CHEBI:65314"/>
        <dbReference type="ChEBI" id="CHEBI:74486"/>
        <dbReference type="EC" id="2.1.1.177"/>
    </reaction>
</comment>
<comment type="subunit">
    <text evidence="1">Homodimer.</text>
</comment>
<comment type="subcellular location">
    <subcellularLocation>
        <location evidence="1">Cytoplasm</location>
    </subcellularLocation>
</comment>
<comment type="similarity">
    <text evidence="1">Belongs to the RNA methyltransferase RlmH family.</text>
</comment>
<name>RLMH_HERAR</name>
<reference key="1">
    <citation type="journal article" date="2007" name="PLoS Genet.">
        <title>A tale of two oxidation states: bacterial colonization of arsenic-rich environments.</title>
        <authorList>
            <person name="Muller D."/>
            <person name="Medigue C."/>
            <person name="Koechler S."/>
            <person name="Barbe V."/>
            <person name="Barakat M."/>
            <person name="Talla E."/>
            <person name="Bonnefoy V."/>
            <person name="Krin E."/>
            <person name="Arsene-Ploetze F."/>
            <person name="Carapito C."/>
            <person name="Chandler M."/>
            <person name="Cournoyer B."/>
            <person name="Cruveiller S."/>
            <person name="Dossat C."/>
            <person name="Duval S."/>
            <person name="Heymann M."/>
            <person name="Leize E."/>
            <person name="Lieutaud A."/>
            <person name="Lievremont D."/>
            <person name="Makita Y."/>
            <person name="Mangenot S."/>
            <person name="Nitschke W."/>
            <person name="Ortet P."/>
            <person name="Perdrial N."/>
            <person name="Schoepp B."/>
            <person name="Siguier P."/>
            <person name="Simeonova D.D."/>
            <person name="Rouy Z."/>
            <person name="Segurens B."/>
            <person name="Turlin E."/>
            <person name="Vallenet D."/>
            <person name="van Dorsselaer A."/>
            <person name="Weiss S."/>
            <person name="Weissenbach J."/>
            <person name="Lett M.-C."/>
            <person name="Danchin A."/>
            <person name="Bertin P.N."/>
        </authorList>
    </citation>
    <scope>NUCLEOTIDE SEQUENCE [LARGE SCALE GENOMIC DNA]</scope>
    <source>
        <strain>ULPAs1</strain>
    </source>
</reference>
<dbReference type="EC" id="2.1.1.177" evidence="1"/>
<dbReference type="EMBL" id="CU207211">
    <property type="protein sequence ID" value="CAL60759.1"/>
    <property type="molecule type" value="Genomic_DNA"/>
</dbReference>
<dbReference type="SMR" id="A4G2M2"/>
<dbReference type="STRING" id="204773.HEAR0553"/>
<dbReference type="KEGG" id="har:HEAR0553"/>
<dbReference type="eggNOG" id="COG1576">
    <property type="taxonomic scope" value="Bacteria"/>
</dbReference>
<dbReference type="HOGENOM" id="CLU_100552_1_0_4"/>
<dbReference type="OrthoDB" id="9806643at2"/>
<dbReference type="Proteomes" id="UP000006697">
    <property type="component" value="Chromosome"/>
</dbReference>
<dbReference type="GO" id="GO:0005737">
    <property type="term" value="C:cytoplasm"/>
    <property type="evidence" value="ECO:0007669"/>
    <property type="project" value="UniProtKB-SubCell"/>
</dbReference>
<dbReference type="GO" id="GO:0070038">
    <property type="term" value="F:rRNA (pseudouridine-N3-)-methyltransferase activity"/>
    <property type="evidence" value="ECO:0007669"/>
    <property type="project" value="UniProtKB-UniRule"/>
</dbReference>
<dbReference type="CDD" id="cd18081">
    <property type="entry name" value="RlmH-like"/>
    <property type="match status" value="1"/>
</dbReference>
<dbReference type="Gene3D" id="3.40.1280.10">
    <property type="match status" value="1"/>
</dbReference>
<dbReference type="HAMAP" id="MF_00658">
    <property type="entry name" value="23SrRNA_methyltr_H"/>
    <property type="match status" value="1"/>
</dbReference>
<dbReference type="InterPro" id="IPR029028">
    <property type="entry name" value="Alpha/beta_knot_MTases"/>
</dbReference>
<dbReference type="InterPro" id="IPR003742">
    <property type="entry name" value="RlmH-like"/>
</dbReference>
<dbReference type="InterPro" id="IPR029026">
    <property type="entry name" value="tRNA_m1G_MTases_N"/>
</dbReference>
<dbReference type="NCBIfam" id="NF000986">
    <property type="entry name" value="PRK00103.1-4"/>
    <property type="match status" value="1"/>
</dbReference>
<dbReference type="NCBIfam" id="TIGR00246">
    <property type="entry name" value="tRNA_RlmH_YbeA"/>
    <property type="match status" value="1"/>
</dbReference>
<dbReference type="PANTHER" id="PTHR33603">
    <property type="entry name" value="METHYLTRANSFERASE"/>
    <property type="match status" value="1"/>
</dbReference>
<dbReference type="PANTHER" id="PTHR33603:SF1">
    <property type="entry name" value="RIBOSOMAL RNA LARGE SUBUNIT METHYLTRANSFERASE H"/>
    <property type="match status" value="1"/>
</dbReference>
<dbReference type="Pfam" id="PF02590">
    <property type="entry name" value="SPOUT_MTase"/>
    <property type="match status" value="1"/>
</dbReference>
<dbReference type="PIRSF" id="PIRSF004505">
    <property type="entry name" value="MT_bac"/>
    <property type="match status" value="1"/>
</dbReference>
<dbReference type="SUPFAM" id="SSF75217">
    <property type="entry name" value="alpha/beta knot"/>
    <property type="match status" value="1"/>
</dbReference>